<name>RLA0_ICTPU</name>
<accession>Q90YX1</accession>
<comment type="function">
    <text>Ribosomal protein P0 is the functional equivalent of E.coli protein L10.</text>
</comment>
<comment type="subunit">
    <text evidence="1">P0 forms a pentameric complex by interaction with dimers of P1 and P2.</text>
</comment>
<comment type="PTM">
    <text evidence="1">Phosphorylated.</text>
</comment>
<comment type="similarity">
    <text evidence="2">Belongs to the universal ribosomal protein uL10 family.</text>
</comment>
<keyword id="KW-0597">Phosphoprotein</keyword>
<keyword id="KW-0687">Ribonucleoprotein</keyword>
<keyword id="KW-0689">Ribosomal protein</keyword>
<reference key="1">
    <citation type="journal article" date="2003" name="Gene">
        <title>Translational machinery of channel catfish: II. Complementary DNA and expression of the complete set of 47 60S ribosomal proteins.</title>
        <authorList>
            <person name="Patterson A.P."/>
            <person name="Karsi A."/>
            <person name="Feng J."/>
            <person name="Liu Z.J."/>
        </authorList>
    </citation>
    <scope>NUCLEOTIDE SEQUENCE [MRNA]</scope>
</reference>
<dbReference type="EMBL" id="AF401551">
    <property type="protein sequence ID" value="AAK95123.1"/>
    <property type="molecule type" value="mRNA"/>
</dbReference>
<dbReference type="RefSeq" id="NP_001187030.1">
    <property type="nucleotide sequence ID" value="NM_001200101.1"/>
</dbReference>
<dbReference type="SMR" id="Q90YX1"/>
<dbReference type="STRING" id="7998.ENSIPUP00000016747"/>
<dbReference type="GeneID" id="100304515"/>
<dbReference type="KEGG" id="ipu:100304515"/>
<dbReference type="CTD" id="6175"/>
<dbReference type="OrthoDB" id="10259902at2759"/>
<dbReference type="Proteomes" id="UP000221080">
    <property type="component" value="Chromosome 28"/>
</dbReference>
<dbReference type="GO" id="GO:0022625">
    <property type="term" value="C:cytosolic large ribosomal subunit"/>
    <property type="evidence" value="ECO:0007669"/>
    <property type="project" value="TreeGrafter"/>
</dbReference>
<dbReference type="GO" id="GO:0070180">
    <property type="term" value="F:large ribosomal subunit rRNA binding"/>
    <property type="evidence" value="ECO:0007669"/>
    <property type="project" value="TreeGrafter"/>
</dbReference>
<dbReference type="GO" id="GO:0003735">
    <property type="term" value="F:structural constituent of ribosome"/>
    <property type="evidence" value="ECO:0007669"/>
    <property type="project" value="TreeGrafter"/>
</dbReference>
<dbReference type="GO" id="GO:0002181">
    <property type="term" value="P:cytoplasmic translation"/>
    <property type="evidence" value="ECO:0007669"/>
    <property type="project" value="TreeGrafter"/>
</dbReference>
<dbReference type="GO" id="GO:0000027">
    <property type="term" value="P:ribosomal large subunit assembly"/>
    <property type="evidence" value="ECO:0007669"/>
    <property type="project" value="TreeGrafter"/>
</dbReference>
<dbReference type="CDD" id="cd05795">
    <property type="entry name" value="Ribosomal_P0_L10e"/>
    <property type="match status" value="1"/>
</dbReference>
<dbReference type="FunFam" id="3.30.70.1730:FF:000002">
    <property type="entry name" value="60S acidic ribosomal protein P0"/>
    <property type="match status" value="1"/>
</dbReference>
<dbReference type="FunFam" id="3.90.105.20:FF:000001">
    <property type="entry name" value="60S acidic ribosomal protein P0"/>
    <property type="match status" value="1"/>
</dbReference>
<dbReference type="Gene3D" id="3.30.70.1730">
    <property type="match status" value="1"/>
</dbReference>
<dbReference type="Gene3D" id="3.90.105.20">
    <property type="match status" value="1"/>
</dbReference>
<dbReference type="InterPro" id="IPR050323">
    <property type="entry name" value="Ribosomal_protein_uL10"/>
</dbReference>
<dbReference type="InterPro" id="IPR001790">
    <property type="entry name" value="Ribosomal_uL10"/>
</dbReference>
<dbReference type="InterPro" id="IPR040637">
    <property type="entry name" value="Ribosomal_uL10-like_insert"/>
</dbReference>
<dbReference type="InterPro" id="IPR043164">
    <property type="entry name" value="Ribosomal_uL10-like_insert_sf"/>
</dbReference>
<dbReference type="InterPro" id="IPR043141">
    <property type="entry name" value="Ribosomal_uL10-like_sf"/>
</dbReference>
<dbReference type="InterPro" id="IPR030670">
    <property type="entry name" value="uL10_eukaryotes"/>
</dbReference>
<dbReference type="PANTHER" id="PTHR45699">
    <property type="entry name" value="60S ACIDIC RIBOSOMAL PROTEIN P0"/>
    <property type="match status" value="1"/>
</dbReference>
<dbReference type="PANTHER" id="PTHR45699:SF3">
    <property type="entry name" value="LARGE RIBOSOMAL SUBUNIT PROTEIN UL10"/>
    <property type="match status" value="1"/>
</dbReference>
<dbReference type="Pfam" id="PF00428">
    <property type="entry name" value="Ribosomal_60s"/>
    <property type="match status" value="1"/>
</dbReference>
<dbReference type="Pfam" id="PF00466">
    <property type="entry name" value="Ribosomal_L10"/>
    <property type="match status" value="1"/>
</dbReference>
<dbReference type="Pfam" id="PF17777">
    <property type="entry name" value="RL10P_insert"/>
    <property type="match status" value="1"/>
</dbReference>
<dbReference type="PIRSF" id="PIRSF039087">
    <property type="entry name" value="L10E"/>
    <property type="match status" value="1"/>
</dbReference>
<dbReference type="SUPFAM" id="SSF160369">
    <property type="entry name" value="Ribosomal protein L10-like"/>
    <property type="match status" value="1"/>
</dbReference>
<proteinExistence type="evidence at transcript level"/>
<sequence length="317" mass="34903">MPREDRATWKSNYFLKIIQLLNDYPKCFIVGADNVGSKQMQTIRLSLRGKAIVLMGKNTMMRKAIRGHLENNPALEKLLPHIRGNVGFVFTKEDLPEVRDMLLANKVPAAARAGAIAPCEVTVPAQNTGLGPEKTSFFQALGITTKISRGTIEILSDVQLIRPGDKVGASEATLLNMLNISPFSYGLIIQQVYDNGSVYSPEVLDITEDALHKRFLEGVRNIASVCLQIGYPTLASIPHSIINGYKRVLRVAVETDYSFPMADKVKAFLADPSRFAVAAAPSVAAAPAAVRLVPLLSRPRRSPRSLMRTWLRPVRLK</sequence>
<organism>
    <name type="scientific">Ictalurus punctatus</name>
    <name type="common">Channel catfish</name>
    <name type="synonym">Silurus punctatus</name>
    <dbReference type="NCBI Taxonomy" id="7998"/>
    <lineage>
        <taxon>Eukaryota</taxon>
        <taxon>Metazoa</taxon>
        <taxon>Chordata</taxon>
        <taxon>Craniata</taxon>
        <taxon>Vertebrata</taxon>
        <taxon>Euteleostomi</taxon>
        <taxon>Actinopterygii</taxon>
        <taxon>Neopterygii</taxon>
        <taxon>Teleostei</taxon>
        <taxon>Ostariophysi</taxon>
        <taxon>Siluriformes</taxon>
        <taxon>Ictaluridae</taxon>
        <taxon>Ictalurus</taxon>
    </lineage>
</organism>
<protein>
    <recommendedName>
        <fullName evidence="2">Large ribosomal subunit protein uL10</fullName>
    </recommendedName>
    <alternativeName>
        <fullName>60S acidic ribosomal protein P0</fullName>
    </alternativeName>
    <alternativeName>
        <fullName>60S ribosomal protein L10E</fullName>
    </alternativeName>
</protein>
<evidence type="ECO:0000250" key="1"/>
<evidence type="ECO:0000305" key="2"/>
<gene>
    <name type="primary">rplp0</name>
</gene>
<feature type="chain" id="PRO_0000154764" description="Large ribosomal subunit protein uL10">
    <location>
        <begin position="1"/>
        <end position="317"/>
    </location>
</feature>